<accession>B8D5W9</accession>
<gene>
    <name evidence="1" type="primary">rpl2</name>
    <name type="ordered locus">DKAM_1174</name>
</gene>
<evidence type="ECO:0000255" key="1">
    <source>
        <dbReference type="HAMAP-Rule" id="MF_01320"/>
    </source>
</evidence>
<evidence type="ECO:0000256" key="2">
    <source>
        <dbReference type="SAM" id="MobiDB-lite"/>
    </source>
</evidence>
<evidence type="ECO:0000305" key="3"/>
<organism>
    <name type="scientific">Desulfurococcus amylolyticus (strain DSM 18924 / JCM 16383 / VKM B-2413 / 1221n)</name>
    <name type="common">Desulfurococcus kamchatkensis</name>
    <dbReference type="NCBI Taxonomy" id="490899"/>
    <lineage>
        <taxon>Archaea</taxon>
        <taxon>Thermoproteota</taxon>
        <taxon>Thermoprotei</taxon>
        <taxon>Desulfurococcales</taxon>
        <taxon>Desulfurococcaceae</taxon>
        <taxon>Desulfurococcus</taxon>
    </lineage>
</organism>
<dbReference type="EMBL" id="CP001140">
    <property type="protein sequence ID" value="ACL11500.1"/>
    <property type="molecule type" value="Genomic_DNA"/>
</dbReference>
<dbReference type="RefSeq" id="WP_012608841.1">
    <property type="nucleotide sequence ID" value="NC_011766.1"/>
</dbReference>
<dbReference type="SMR" id="B8D5W9"/>
<dbReference type="STRING" id="490899.DKAM_1174"/>
<dbReference type="GeneID" id="7171257"/>
<dbReference type="KEGG" id="dka:DKAM_1174"/>
<dbReference type="eggNOG" id="arCOG04067">
    <property type="taxonomic scope" value="Archaea"/>
</dbReference>
<dbReference type="HOGENOM" id="CLU_036235_0_3_2"/>
<dbReference type="Proteomes" id="UP000006903">
    <property type="component" value="Chromosome"/>
</dbReference>
<dbReference type="GO" id="GO:0022625">
    <property type="term" value="C:cytosolic large ribosomal subunit"/>
    <property type="evidence" value="ECO:0007669"/>
    <property type="project" value="TreeGrafter"/>
</dbReference>
<dbReference type="GO" id="GO:0019843">
    <property type="term" value="F:rRNA binding"/>
    <property type="evidence" value="ECO:0007669"/>
    <property type="project" value="UniProtKB-UniRule"/>
</dbReference>
<dbReference type="GO" id="GO:0003735">
    <property type="term" value="F:structural constituent of ribosome"/>
    <property type="evidence" value="ECO:0007669"/>
    <property type="project" value="InterPro"/>
</dbReference>
<dbReference type="GO" id="GO:0002181">
    <property type="term" value="P:cytoplasmic translation"/>
    <property type="evidence" value="ECO:0007669"/>
    <property type="project" value="TreeGrafter"/>
</dbReference>
<dbReference type="FunFam" id="4.10.950.10:FF:000002">
    <property type="entry name" value="60S ribosomal protein L2"/>
    <property type="match status" value="1"/>
</dbReference>
<dbReference type="Gene3D" id="2.30.30.30">
    <property type="match status" value="1"/>
</dbReference>
<dbReference type="Gene3D" id="2.40.50.140">
    <property type="entry name" value="Nucleic acid-binding proteins"/>
    <property type="match status" value="1"/>
</dbReference>
<dbReference type="Gene3D" id="4.10.950.10">
    <property type="entry name" value="Ribosomal protein L2, domain 3"/>
    <property type="match status" value="1"/>
</dbReference>
<dbReference type="HAMAP" id="MF_01320_A">
    <property type="entry name" value="Ribosomal_uL2_A"/>
    <property type="match status" value="1"/>
</dbReference>
<dbReference type="InterPro" id="IPR012340">
    <property type="entry name" value="NA-bd_OB-fold"/>
</dbReference>
<dbReference type="InterPro" id="IPR014722">
    <property type="entry name" value="Rib_uL2_dom2"/>
</dbReference>
<dbReference type="InterPro" id="IPR002171">
    <property type="entry name" value="Ribosomal_uL2"/>
</dbReference>
<dbReference type="InterPro" id="IPR023672">
    <property type="entry name" value="Ribosomal_uL2_arc_euk"/>
</dbReference>
<dbReference type="InterPro" id="IPR022669">
    <property type="entry name" value="Ribosomal_uL2_C"/>
</dbReference>
<dbReference type="InterPro" id="IPR014726">
    <property type="entry name" value="Ribosomal_uL2_dom3"/>
</dbReference>
<dbReference type="InterPro" id="IPR022666">
    <property type="entry name" value="Ribosomal_uL2_RNA-bd_dom"/>
</dbReference>
<dbReference type="InterPro" id="IPR008991">
    <property type="entry name" value="Translation_prot_SH3-like_sf"/>
</dbReference>
<dbReference type="NCBIfam" id="NF007180">
    <property type="entry name" value="PRK09612.1"/>
    <property type="match status" value="1"/>
</dbReference>
<dbReference type="PANTHER" id="PTHR13691:SF16">
    <property type="entry name" value="LARGE RIBOSOMAL SUBUNIT PROTEIN UL2"/>
    <property type="match status" value="1"/>
</dbReference>
<dbReference type="PANTHER" id="PTHR13691">
    <property type="entry name" value="RIBOSOMAL PROTEIN L2"/>
    <property type="match status" value="1"/>
</dbReference>
<dbReference type="Pfam" id="PF00181">
    <property type="entry name" value="Ribosomal_L2"/>
    <property type="match status" value="1"/>
</dbReference>
<dbReference type="Pfam" id="PF03947">
    <property type="entry name" value="Ribosomal_L2_C"/>
    <property type="match status" value="1"/>
</dbReference>
<dbReference type="PIRSF" id="PIRSF002158">
    <property type="entry name" value="Ribosomal_L2"/>
    <property type="match status" value="1"/>
</dbReference>
<dbReference type="SMART" id="SM01383">
    <property type="entry name" value="Ribosomal_L2"/>
    <property type="match status" value="1"/>
</dbReference>
<dbReference type="SMART" id="SM01382">
    <property type="entry name" value="Ribosomal_L2_C"/>
    <property type="match status" value="1"/>
</dbReference>
<dbReference type="SUPFAM" id="SSF50249">
    <property type="entry name" value="Nucleic acid-binding proteins"/>
    <property type="match status" value="1"/>
</dbReference>
<dbReference type="SUPFAM" id="SSF50104">
    <property type="entry name" value="Translation proteins SH3-like domain"/>
    <property type="match status" value="1"/>
</dbReference>
<proteinExistence type="inferred from homology"/>
<reference key="1">
    <citation type="journal article" date="2009" name="J. Bacteriol.">
        <title>Complete genome sequence of the anaerobic, protein-degrading hyperthermophilic crenarchaeon Desulfurococcus kamchatkensis.</title>
        <authorList>
            <person name="Ravin N.V."/>
            <person name="Mardanov A.V."/>
            <person name="Beletsky A.V."/>
            <person name="Kublanov I.V."/>
            <person name="Kolganova T.V."/>
            <person name="Lebedinsky A.V."/>
            <person name="Chernyh N.A."/>
            <person name="Bonch-Osmolovskaya E.A."/>
            <person name="Skryabin K.G."/>
        </authorList>
    </citation>
    <scope>NUCLEOTIDE SEQUENCE [LARGE SCALE GENOMIC DNA]</scope>
    <source>
        <strain>DSM 18924 / JCM 16383 / VKM B-2413 / 1221n</strain>
    </source>
</reference>
<comment type="function">
    <text evidence="1">One of the primary rRNA binding proteins. Required for association of the 30S and 50S subunits to form the 70S ribosome, for tRNA binding and peptide bond formation. It has been suggested to have peptidyltransferase activity; this is somewhat controversial. Makes several contacts with the 16S rRNA in the 70S ribosome.</text>
</comment>
<comment type="subunit">
    <text evidence="1">Part of the 50S ribosomal subunit. Forms a bridge to the 30S subunit in the 70S ribosome.</text>
</comment>
<comment type="similarity">
    <text evidence="1">Belongs to the universal ribosomal protein uL2 family.</text>
</comment>
<protein>
    <recommendedName>
        <fullName evidence="1">Large ribosomal subunit protein uL2</fullName>
    </recommendedName>
    <alternativeName>
        <fullName evidence="3">50S ribosomal protein L2</fullName>
    </alternativeName>
</protein>
<name>RL2_DESA1</name>
<keyword id="KW-0687">Ribonucleoprotein</keyword>
<keyword id="KW-0689">Ribosomal protein</keyword>
<keyword id="KW-0694">RNA-binding</keyword>
<keyword id="KW-0699">rRNA-binding</keyword>
<feature type="chain" id="PRO_1000165745" description="Large ribosomal subunit protein uL2">
    <location>
        <begin position="1"/>
        <end position="239"/>
    </location>
</feature>
<feature type="region of interest" description="Disordered" evidence="2">
    <location>
        <begin position="202"/>
        <end position="239"/>
    </location>
</feature>
<feature type="compositionally biased region" description="Basic residues" evidence="2">
    <location>
        <begin position="225"/>
        <end position="239"/>
    </location>
</feature>
<sequence length="239" mass="25566">MGKRIIPQRRGKASPVFKTPDHIHVAPARYPLLDPSKTYKAVVEDLVHDPGRWVPLAQVKLETGLVFYVPAVEGMYAGQIIEIGPGAKPVNGNILPVGMIPEGMQVVNIEKRPGDGGKFVRASGTYAVIVGRAGGKTQVQLPSGRVIEVPNESRAMIGVIAGGGRLEKPLLKAGAAYYKWSAKSRVWPKVRGVAMNAAFHPHGGGSHQHVGRPSTVARNTPPGRKVGHIAARRTGRRKG</sequence>